<feature type="chain" id="PRO_0000133309" description="Probable protein E5A">
    <location>
        <begin position="1"/>
        <end position="91"/>
    </location>
</feature>
<sequence>MEVVPVQIAAGTTSTFILPVIIAFVVCFVSIILIVWISEFIVYTSVLVLTLLLYLLLWLLLTTPLQFFLLTLLVCYCPALYIHYYIVTTQQ</sequence>
<comment type="similarity">
    <text evidence="1">Belongs to the papillomaviridae E5A protein family.</text>
</comment>
<organism>
    <name type="scientific">Human papillomavirus type 6b</name>
    <dbReference type="NCBI Taxonomy" id="10600"/>
    <lineage>
        <taxon>Viruses</taxon>
        <taxon>Monodnaviria</taxon>
        <taxon>Shotokuvirae</taxon>
        <taxon>Cossaviricota</taxon>
        <taxon>Papovaviricetes</taxon>
        <taxon>Zurhausenvirales</taxon>
        <taxon>Papillomaviridae</taxon>
        <taxon>Firstpapillomavirinae</taxon>
        <taxon>Alphapapillomavirus</taxon>
        <taxon>Alphapapillomavirus 10</taxon>
    </lineage>
</organism>
<dbReference type="EMBL" id="X00203">
    <property type="protein sequence ID" value="CAA25023.1"/>
    <property type="molecule type" value="Genomic_DNA"/>
</dbReference>
<dbReference type="PIR" id="A20558">
    <property type="entry name" value="W5WL6A"/>
</dbReference>
<dbReference type="RefSeq" id="NP_040301.1">
    <property type="nucleotide sequence ID" value="NC_001355.1"/>
</dbReference>
<dbReference type="SMR" id="P06460"/>
<dbReference type="BioGRID" id="3509160">
    <property type="interactions" value="276"/>
</dbReference>
<dbReference type="IntAct" id="P06460">
    <property type="interactions" value="276"/>
</dbReference>
<dbReference type="MINT" id="P06460"/>
<dbReference type="GeneID" id="1489366"/>
<dbReference type="KEGG" id="vg:1489366"/>
<dbReference type="Proteomes" id="UP000007676">
    <property type="component" value="Genome"/>
</dbReference>
<dbReference type="InterPro" id="IPR004270">
    <property type="entry name" value="Papilloma_E5_alpha"/>
</dbReference>
<dbReference type="Pfam" id="PF03025">
    <property type="entry name" value="Papilloma_E5"/>
    <property type="match status" value="1"/>
</dbReference>
<organismHost>
    <name type="scientific">Homo sapiens</name>
    <name type="common">Human</name>
    <dbReference type="NCBI Taxonomy" id="9606"/>
</organismHost>
<proteinExistence type="inferred from homology"/>
<protein>
    <recommendedName>
        <fullName>Probable protein E5A</fullName>
    </recommendedName>
</protein>
<name>VE5A_HPV6B</name>
<keyword id="KW-0244">Early protein</keyword>
<reference key="1">
    <citation type="journal article" date="1983" name="EMBO J.">
        <title>DNA sequence and genome organization of genital human papillomavirus type 6b.</title>
        <authorList>
            <person name="Schwarz E."/>
            <person name="Durst M."/>
            <person name="Demankowski C."/>
            <person name="Lattermann O."/>
            <person name="Zech R."/>
            <person name="Wolfsperger E."/>
            <person name="Suhai S."/>
            <person name="zur Hausen H."/>
        </authorList>
    </citation>
    <scope>NUCLEOTIDE SEQUENCE [GENOMIC DNA]</scope>
</reference>
<evidence type="ECO:0000305" key="1"/>
<accession>P06460</accession>